<name>COX3_XENLA</name>
<evidence type="ECO:0000250" key="1">
    <source>
        <dbReference type="UniProtKB" id="P00415"/>
    </source>
</evidence>
<evidence type="ECO:0000250" key="2">
    <source>
        <dbReference type="UniProtKB" id="P00420"/>
    </source>
</evidence>
<evidence type="ECO:0000305" key="3"/>
<proteinExistence type="inferred from homology"/>
<comment type="function">
    <text evidence="2">Component of the cytochrome c oxidase, the last enzyme in the mitochondrial electron transport chain which drives oxidative phosphorylation. The respiratory chain contains 3 multisubunit complexes succinate dehydrogenase (complex II, CII), ubiquinol-cytochrome c oxidoreductase (cytochrome b-c1 complex, complex III, CIII) and cytochrome c oxidase (complex IV, CIV), that cooperate to transfer electrons derived from NADH and succinate to molecular oxygen, creating an electrochemical gradient over the inner membrane that drives transmembrane transport and the ATP synthase. Cytochrome c oxidase is the component of the respiratory chain that catalyzes the reduction of oxygen to water. Electrons originating from reduced cytochrome c in the intermembrane space (IMS) are transferred via the dinuclear copper A center (CU(A)) of subunit 2 and heme A of subunit 1 to the active site in subunit 1, a binuclear center (BNC) formed by heme A3 and copper B (CU(B)). The BNC reduces molecular oxygen to 2 water molecules using 4 electrons from cytochrome c in the IMS and 4 protons from the mitochondrial matrix.</text>
</comment>
<comment type="catalytic activity">
    <reaction evidence="2">
        <text>4 Fe(II)-[cytochrome c] + O2 + 8 H(+)(in) = 4 Fe(III)-[cytochrome c] + 2 H2O + 4 H(+)(out)</text>
        <dbReference type="Rhea" id="RHEA:11436"/>
        <dbReference type="Rhea" id="RHEA-COMP:10350"/>
        <dbReference type="Rhea" id="RHEA-COMP:14399"/>
        <dbReference type="ChEBI" id="CHEBI:15377"/>
        <dbReference type="ChEBI" id="CHEBI:15378"/>
        <dbReference type="ChEBI" id="CHEBI:15379"/>
        <dbReference type="ChEBI" id="CHEBI:29033"/>
        <dbReference type="ChEBI" id="CHEBI:29034"/>
        <dbReference type="EC" id="7.1.1.9"/>
    </reaction>
    <physiologicalReaction direction="left-to-right" evidence="2">
        <dbReference type="Rhea" id="RHEA:11437"/>
    </physiologicalReaction>
</comment>
<comment type="subunit">
    <text evidence="1">Component of the cytochrome c oxidase (complex IV, CIV), a multisubunit enzyme composed of 14 subunits. The complex is composed of a catalytic core of 3 subunits MT-CO1, MT-CO2 and MT-CO3, encoded in the mitochondrial DNA, and 11 supernumerary subunits COX4I, COX5A, COX5B, COX6A, COX6B, COX6C, COX7A, COX7B, COX7C, COX8 and NDUFA4, which are encoded in the nuclear genome. The complex exists as a monomer or a dimer and forms supercomplexes (SCs) in the inner mitochondrial membrane with NADH-ubiquinone oxidoreductase (complex I, CI) and ubiquinol-cytochrome c oxidoreductase (cytochrome b-c1 complex, complex III, CIII), resulting in different assemblies (supercomplex SCI(1)III(2)IV(1) and megacomplex MCI(2)III(2)IV(2)).</text>
</comment>
<comment type="subcellular location">
    <subcellularLocation>
        <location evidence="1">Mitochondrion inner membrane</location>
        <topology evidence="1">Multi-pass membrane protein</topology>
    </subcellularLocation>
</comment>
<comment type="similarity">
    <text evidence="3">Belongs to the cytochrome c oxidase subunit 3 family.</text>
</comment>
<geneLocation type="mitochondrion"/>
<protein>
    <recommendedName>
        <fullName>Cytochrome c oxidase subunit 3</fullName>
        <ecNumber>7.1.1.9</ecNumber>
    </recommendedName>
    <alternativeName>
        <fullName>Cytochrome c oxidase polypeptide III</fullName>
    </alternativeName>
</protein>
<feature type="chain" id="PRO_0000183872" description="Cytochrome c oxidase subunit 3">
    <location>
        <begin position="1"/>
        <end position="260"/>
    </location>
</feature>
<feature type="topological domain" description="Mitochondrial matrix" evidence="1">
    <location>
        <begin position="1"/>
        <end position="15"/>
    </location>
</feature>
<feature type="transmembrane region" description="Helical; Name=I" evidence="1">
    <location>
        <begin position="16"/>
        <end position="34"/>
    </location>
</feature>
<feature type="topological domain" description="Mitochondrial intermembrane" evidence="1">
    <location>
        <begin position="35"/>
        <end position="40"/>
    </location>
</feature>
<feature type="transmembrane region" description="Helical; Name=II" evidence="1">
    <location>
        <begin position="41"/>
        <end position="66"/>
    </location>
</feature>
<feature type="topological domain" description="Mitochondrial matrix" evidence="1">
    <location>
        <begin position="67"/>
        <end position="72"/>
    </location>
</feature>
<feature type="transmembrane region" description="Helical; Name=III" evidence="1">
    <location>
        <begin position="73"/>
        <end position="105"/>
    </location>
</feature>
<feature type="topological domain" description="Mitochondrial intermembrane" evidence="1">
    <location>
        <begin position="106"/>
        <end position="128"/>
    </location>
</feature>
<feature type="transmembrane region" description="Helical; Name=IV" evidence="1">
    <location>
        <begin position="129"/>
        <end position="152"/>
    </location>
</feature>
<feature type="topological domain" description="Mitochondrial matrix" evidence="1">
    <location>
        <begin position="153"/>
        <end position="155"/>
    </location>
</feature>
<feature type="transmembrane region" description="Helical; Name=V" evidence="1">
    <location>
        <begin position="156"/>
        <end position="183"/>
    </location>
</feature>
<feature type="topological domain" description="Mitochondrial intermembrane" evidence="1">
    <location>
        <begin position="184"/>
        <end position="190"/>
    </location>
</feature>
<feature type="transmembrane region" description="Helical; Name=VI" evidence="1">
    <location>
        <begin position="191"/>
        <end position="223"/>
    </location>
</feature>
<feature type="topological domain" description="Mitochondrial matrix" evidence="1">
    <location>
        <begin position="224"/>
        <end position="232"/>
    </location>
</feature>
<feature type="transmembrane region" description="Helical; Name=VII" evidence="1">
    <location>
        <begin position="233"/>
        <end position="255"/>
    </location>
</feature>
<feature type="topological domain" description="Mitochondrial intermembrane" evidence="1">
    <location>
        <begin position="256"/>
        <end position="260"/>
    </location>
</feature>
<dbReference type="EC" id="7.1.1.9"/>
<dbReference type="EMBL" id="M10217">
    <property type="protein sequence ID" value="AAA66464.1"/>
    <property type="molecule type" value="Genomic_DNA"/>
</dbReference>
<dbReference type="PIR" id="A00486">
    <property type="entry name" value="OTXL3"/>
</dbReference>
<dbReference type="SMR" id="P00419"/>
<dbReference type="KEGG" id="xla:2642084"/>
<dbReference type="CTD" id="4514"/>
<dbReference type="OrthoDB" id="10050457at2759"/>
<dbReference type="Proteomes" id="UP000186698">
    <property type="component" value="Mitochondrion MT"/>
</dbReference>
<dbReference type="Bgee" id="2642084">
    <property type="expression patterns" value="Expressed in kidney and 20 other cell types or tissues"/>
</dbReference>
<dbReference type="GO" id="GO:0005743">
    <property type="term" value="C:mitochondrial inner membrane"/>
    <property type="evidence" value="ECO:0007669"/>
    <property type="project" value="UniProtKB-SubCell"/>
</dbReference>
<dbReference type="GO" id="GO:0005739">
    <property type="term" value="C:mitochondrion"/>
    <property type="evidence" value="ECO:0000318"/>
    <property type="project" value="GO_Central"/>
</dbReference>
<dbReference type="GO" id="GO:0045277">
    <property type="term" value="C:respiratory chain complex IV"/>
    <property type="evidence" value="ECO:0000250"/>
    <property type="project" value="UniProtKB"/>
</dbReference>
<dbReference type="GO" id="GO:0004129">
    <property type="term" value="F:cytochrome-c oxidase activity"/>
    <property type="evidence" value="ECO:0007669"/>
    <property type="project" value="UniProtKB-EC"/>
</dbReference>
<dbReference type="GO" id="GO:0006123">
    <property type="term" value="P:mitochondrial electron transport, cytochrome c to oxygen"/>
    <property type="evidence" value="ECO:0000318"/>
    <property type="project" value="GO_Central"/>
</dbReference>
<dbReference type="CDD" id="cd01665">
    <property type="entry name" value="Cyt_c_Oxidase_III"/>
    <property type="match status" value="1"/>
</dbReference>
<dbReference type="FunFam" id="1.10.287.70:FF:000048">
    <property type="entry name" value="Cytochrome c oxidase subunit 3"/>
    <property type="match status" value="1"/>
</dbReference>
<dbReference type="FunFam" id="1.20.120.80:FF:000002">
    <property type="entry name" value="Cytochrome c oxidase subunit 3"/>
    <property type="match status" value="1"/>
</dbReference>
<dbReference type="Gene3D" id="1.10.287.70">
    <property type="match status" value="1"/>
</dbReference>
<dbReference type="Gene3D" id="1.20.120.80">
    <property type="entry name" value="Cytochrome c oxidase, subunit III, four-helix bundle"/>
    <property type="match status" value="1"/>
</dbReference>
<dbReference type="InterPro" id="IPR024791">
    <property type="entry name" value="Cyt_c/ubiquinol_Oxase_su3"/>
</dbReference>
<dbReference type="InterPro" id="IPR033945">
    <property type="entry name" value="Cyt_c_oxase_su3_dom"/>
</dbReference>
<dbReference type="InterPro" id="IPR000298">
    <property type="entry name" value="Cyt_c_oxidase-like_su3"/>
</dbReference>
<dbReference type="InterPro" id="IPR035973">
    <property type="entry name" value="Cyt_c_oxidase_su3-like_sf"/>
</dbReference>
<dbReference type="InterPro" id="IPR013833">
    <property type="entry name" value="Cyt_c_oxidase_su3_a-hlx"/>
</dbReference>
<dbReference type="PANTHER" id="PTHR11403:SF7">
    <property type="entry name" value="CYTOCHROME C OXIDASE SUBUNIT 3"/>
    <property type="match status" value="1"/>
</dbReference>
<dbReference type="PANTHER" id="PTHR11403">
    <property type="entry name" value="CYTOCHROME C OXIDASE SUBUNIT III"/>
    <property type="match status" value="1"/>
</dbReference>
<dbReference type="Pfam" id="PF00510">
    <property type="entry name" value="COX3"/>
    <property type="match status" value="1"/>
</dbReference>
<dbReference type="SUPFAM" id="SSF81452">
    <property type="entry name" value="Cytochrome c oxidase subunit III-like"/>
    <property type="match status" value="1"/>
</dbReference>
<dbReference type="PROSITE" id="PS50253">
    <property type="entry name" value="COX3"/>
    <property type="match status" value="1"/>
</dbReference>
<accession>P00419</accession>
<keyword id="KW-0472">Membrane</keyword>
<keyword id="KW-0496">Mitochondrion</keyword>
<keyword id="KW-0999">Mitochondrion inner membrane</keyword>
<keyword id="KW-1185">Reference proteome</keyword>
<keyword id="KW-1278">Translocase</keyword>
<keyword id="KW-0812">Transmembrane</keyword>
<keyword id="KW-1133">Transmembrane helix</keyword>
<sequence length="260" mass="29593">MAHQAHAYHMVDPSPWPLTGAVAALLLTSGLAMWFHFGSMILLTLGLITMVLTMIQWWRDVIREGTFQGHHTPPVQKGLRYGMILFITSEVFFFIGFFWAFYNSSLAPTYELGECWPPTGITPLNPFEVPLLNTAVLLASGVTVTWAHHSIMHGDRKEAIQSLTLTILLGLYFTALQAMEYYEAPFTIADGVYGSTFFVATGFHGLHVIIGSLFLSVCLLRQIQYHFTSKHHFGFEAAWYWHFVDVVWLFLYVSIYWWGS</sequence>
<gene>
    <name type="primary">mt-co3</name>
    <name type="synonym">coiii</name>
    <name type="synonym">coxiii</name>
    <name type="synonym">mtco3</name>
</gene>
<reference key="1">
    <citation type="journal article" date="1985" name="J. Biol. Chem.">
        <title>The complete nucleotide sequence of the Xenopus laevis mitochondrial genome.</title>
        <authorList>
            <person name="Roe B.A."/>
            <person name="Ma D.-P."/>
            <person name="Wilson R.K."/>
            <person name="Wong J.F.-H."/>
        </authorList>
    </citation>
    <scope>NUCLEOTIDE SEQUENCE [GENOMIC DNA]</scope>
</reference>
<organism>
    <name type="scientific">Xenopus laevis</name>
    <name type="common">African clawed frog</name>
    <dbReference type="NCBI Taxonomy" id="8355"/>
    <lineage>
        <taxon>Eukaryota</taxon>
        <taxon>Metazoa</taxon>
        <taxon>Chordata</taxon>
        <taxon>Craniata</taxon>
        <taxon>Vertebrata</taxon>
        <taxon>Euteleostomi</taxon>
        <taxon>Amphibia</taxon>
        <taxon>Batrachia</taxon>
        <taxon>Anura</taxon>
        <taxon>Pipoidea</taxon>
        <taxon>Pipidae</taxon>
        <taxon>Xenopodinae</taxon>
        <taxon>Xenopus</taxon>
        <taxon>Xenopus</taxon>
    </lineage>
</organism>